<gene>
    <name evidence="1" type="primary">gpt</name>
    <name type="ordered locus">RPD_2243</name>
</gene>
<sequence length="172" mass="18484">MGSGAEASVAERRPFPVSWDQFHRDCRALTWRLNAVGPFHAVVAITRGGLVPAAIVARELGLRVIDTICVASYAHDKQGELQVLKGVSEQTAALGGGTGKGLLIVDDLVDTGKTGRMVRDLLPDAHFATVYAKPKGKPLVDTFITEVSQDTWIFFPWDTGLSFQPPLKDGAA</sequence>
<keyword id="KW-0997">Cell inner membrane</keyword>
<keyword id="KW-1003">Cell membrane</keyword>
<keyword id="KW-0328">Glycosyltransferase</keyword>
<keyword id="KW-0460">Magnesium</keyword>
<keyword id="KW-0472">Membrane</keyword>
<keyword id="KW-0479">Metal-binding</keyword>
<keyword id="KW-0660">Purine salvage</keyword>
<keyword id="KW-0808">Transferase</keyword>
<feature type="chain" id="PRO_0000261016" description="Xanthine-guanine phosphoribosyltransferase">
    <location>
        <begin position="1"/>
        <end position="172"/>
    </location>
</feature>
<feature type="binding site" evidence="1">
    <location>
        <begin position="47"/>
        <end position="48"/>
    </location>
    <ligand>
        <name>5-phospho-alpha-D-ribose 1-diphosphate</name>
        <dbReference type="ChEBI" id="CHEBI:58017"/>
    </ligand>
</feature>
<feature type="binding site" evidence="1">
    <location>
        <begin position="106"/>
        <end position="114"/>
    </location>
    <ligand>
        <name>5-phospho-alpha-D-ribose 1-diphosphate</name>
        <dbReference type="ChEBI" id="CHEBI:58017"/>
    </ligand>
</feature>
<feature type="binding site" evidence="1">
    <location>
        <position position="107"/>
    </location>
    <ligand>
        <name>Mg(2+)</name>
        <dbReference type="ChEBI" id="CHEBI:18420"/>
    </ligand>
</feature>
<feature type="binding site" evidence="1">
    <location>
        <begin position="110"/>
        <end position="114"/>
    </location>
    <ligand>
        <name>GMP</name>
        <dbReference type="ChEBI" id="CHEBI:58115"/>
    </ligand>
</feature>
<feature type="binding site" evidence="1">
    <location>
        <position position="110"/>
    </location>
    <ligand>
        <name>guanine</name>
        <dbReference type="ChEBI" id="CHEBI:16235"/>
    </ligand>
</feature>
<feature type="binding site" evidence="1">
    <location>
        <position position="110"/>
    </location>
    <ligand>
        <name>xanthine</name>
        <dbReference type="ChEBI" id="CHEBI:17712"/>
    </ligand>
</feature>
<feature type="binding site" evidence="1">
    <location>
        <begin position="152"/>
        <end position="153"/>
    </location>
    <ligand>
        <name>GMP</name>
        <dbReference type="ChEBI" id="CHEBI:58115"/>
    </ligand>
</feature>
<feature type="binding site" evidence="1">
    <location>
        <position position="153"/>
    </location>
    <ligand>
        <name>guanine</name>
        <dbReference type="ChEBI" id="CHEBI:16235"/>
    </ligand>
</feature>
<feature type="binding site" evidence="1">
    <location>
        <position position="153"/>
    </location>
    <ligand>
        <name>xanthine</name>
        <dbReference type="ChEBI" id="CHEBI:17712"/>
    </ligand>
</feature>
<evidence type="ECO:0000255" key="1">
    <source>
        <dbReference type="HAMAP-Rule" id="MF_01903"/>
    </source>
</evidence>
<name>XGPT_RHOPS</name>
<proteinExistence type="inferred from homology"/>
<comment type="function">
    <text evidence="1">Purine salvage pathway enzyme that catalyzes the transfer of the ribosyl-5-phosphate group from 5-phospho-alpha-D-ribose 1-diphosphate (PRPP) to the N9 position of the 6-oxopurines guanine and xanthine to form the corresponding ribonucleotides GMP (guanosine 5'-monophosphate) and XMP (xanthosine 5'-monophosphate), with the release of PPi. To a lesser extent, also acts on hypoxanthine.</text>
</comment>
<comment type="catalytic activity">
    <reaction evidence="1">
        <text>GMP + diphosphate = guanine + 5-phospho-alpha-D-ribose 1-diphosphate</text>
        <dbReference type="Rhea" id="RHEA:25424"/>
        <dbReference type="ChEBI" id="CHEBI:16235"/>
        <dbReference type="ChEBI" id="CHEBI:33019"/>
        <dbReference type="ChEBI" id="CHEBI:58017"/>
        <dbReference type="ChEBI" id="CHEBI:58115"/>
    </reaction>
    <physiologicalReaction direction="right-to-left" evidence="1">
        <dbReference type="Rhea" id="RHEA:25426"/>
    </physiologicalReaction>
</comment>
<comment type="catalytic activity">
    <reaction evidence="1">
        <text>XMP + diphosphate = xanthine + 5-phospho-alpha-D-ribose 1-diphosphate</text>
        <dbReference type="Rhea" id="RHEA:10800"/>
        <dbReference type="ChEBI" id="CHEBI:17712"/>
        <dbReference type="ChEBI" id="CHEBI:33019"/>
        <dbReference type="ChEBI" id="CHEBI:57464"/>
        <dbReference type="ChEBI" id="CHEBI:58017"/>
        <dbReference type="EC" id="2.4.2.22"/>
    </reaction>
    <physiologicalReaction direction="right-to-left" evidence="1">
        <dbReference type="Rhea" id="RHEA:10802"/>
    </physiologicalReaction>
</comment>
<comment type="catalytic activity">
    <reaction evidence="1">
        <text>IMP + diphosphate = hypoxanthine + 5-phospho-alpha-D-ribose 1-diphosphate</text>
        <dbReference type="Rhea" id="RHEA:17973"/>
        <dbReference type="ChEBI" id="CHEBI:17368"/>
        <dbReference type="ChEBI" id="CHEBI:33019"/>
        <dbReference type="ChEBI" id="CHEBI:58017"/>
        <dbReference type="ChEBI" id="CHEBI:58053"/>
    </reaction>
    <physiologicalReaction direction="right-to-left" evidence="1">
        <dbReference type="Rhea" id="RHEA:17975"/>
    </physiologicalReaction>
</comment>
<comment type="cofactor">
    <cofactor evidence="1">
        <name>Mg(2+)</name>
        <dbReference type="ChEBI" id="CHEBI:18420"/>
    </cofactor>
</comment>
<comment type="pathway">
    <text evidence="1">Purine metabolism; GMP biosynthesis via salvage pathway; GMP from guanine: step 1/1.</text>
</comment>
<comment type="pathway">
    <text evidence="1">Purine metabolism; XMP biosynthesis via salvage pathway; XMP from xanthine: step 1/1.</text>
</comment>
<comment type="subunit">
    <text evidence="1">Homotetramer.</text>
</comment>
<comment type="subcellular location">
    <subcellularLocation>
        <location evidence="1">Cell inner membrane</location>
        <topology evidence="1">Peripheral membrane protein</topology>
    </subcellularLocation>
</comment>
<comment type="similarity">
    <text evidence="1">Belongs to the purine/pyrimidine phosphoribosyltransferase family. XGPT subfamily.</text>
</comment>
<dbReference type="EC" id="2.4.2.-" evidence="1"/>
<dbReference type="EC" id="2.4.2.22" evidence="1"/>
<dbReference type="EMBL" id="CP000283">
    <property type="protein sequence ID" value="ABE39478.1"/>
    <property type="molecule type" value="Genomic_DNA"/>
</dbReference>
<dbReference type="SMR" id="Q138L1"/>
<dbReference type="STRING" id="316057.RPD_2243"/>
<dbReference type="KEGG" id="rpd:RPD_2243"/>
<dbReference type="eggNOG" id="COG2236">
    <property type="taxonomic scope" value="Bacteria"/>
</dbReference>
<dbReference type="HOGENOM" id="CLU_080904_3_0_5"/>
<dbReference type="BioCyc" id="RPAL316057:RPD_RS11260-MONOMER"/>
<dbReference type="UniPathway" id="UPA00602">
    <property type="reaction ID" value="UER00658"/>
</dbReference>
<dbReference type="UniPathway" id="UPA00909">
    <property type="reaction ID" value="UER00887"/>
</dbReference>
<dbReference type="Proteomes" id="UP000001818">
    <property type="component" value="Chromosome"/>
</dbReference>
<dbReference type="GO" id="GO:0005886">
    <property type="term" value="C:plasma membrane"/>
    <property type="evidence" value="ECO:0007669"/>
    <property type="project" value="UniProtKB-SubCell"/>
</dbReference>
<dbReference type="GO" id="GO:0052657">
    <property type="term" value="F:guanine phosphoribosyltransferase activity"/>
    <property type="evidence" value="ECO:0007669"/>
    <property type="project" value="RHEA"/>
</dbReference>
<dbReference type="GO" id="GO:0004422">
    <property type="term" value="F:hypoxanthine phosphoribosyltransferase activity"/>
    <property type="evidence" value="ECO:0007669"/>
    <property type="project" value="RHEA"/>
</dbReference>
<dbReference type="GO" id="GO:0000287">
    <property type="term" value="F:magnesium ion binding"/>
    <property type="evidence" value="ECO:0007669"/>
    <property type="project" value="UniProtKB-UniRule"/>
</dbReference>
<dbReference type="GO" id="GO:0000310">
    <property type="term" value="F:xanthine phosphoribosyltransferase activity"/>
    <property type="evidence" value="ECO:0007669"/>
    <property type="project" value="UniProtKB-UniRule"/>
</dbReference>
<dbReference type="GO" id="GO:0032263">
    <property type="term" value="P:GMP salvage"/>
    <property type="evidence" value="ECO:0007669"/>
    <property type="project" value="UniProtKB-UniRule"/>
</dbReference>
<dbReference type="GO" id="GO:0006166">
    <property type="term" value="P:purine ribonucleoside salvage"/>
    <property type="evidence" value="ECO:0007669"/>
    <property type="project" value="UniProtKB-KW"/>
</dbReference>
<dbReference type="GO" id="GO:0032265">
    <property type="term" value="P:XMP salvage"/>
    <property type="evidence" value="ECO:0007669"/>
    <property type="project" value="UniProtKB-UniRule"/>
</dbReference>
<dbReference type="CDD" id="cd06223">
    <property type="entry name" value="PRTases_typeI"/>
    <property type="match status" value="1"/>
</dbReference>
<dbReference type="Gene3D" id="3.40.50.2020">
    <property type="match status" value="1"/>
</dbReference>
<dbReference type="HAMAP" id="MF_01903">
    <property type="entry name" value="XGPRT"/>
    <property type="match status" value="1"/>
</dbReference>
<dbReference type="InterPro" id="IPR000836">
    <property type="entry name" value="PRibTrfase_dom"/>
</dbReference>
<dbReference type="InterPro" id="IPR029057">
    <property type="entry name" value="PRTase-like"/>
</dbReference>
<dbReference type="InterPro" id="IPR023747">
    <property type="entry name" value="Xanthine_Guanine_PRibTrfase"/>
</dbReference>
<dbReference type="NCBIfam" id="NF006613">
    <property type="entry name" value="PRK09177.1"/>
    <property type="match status" value="1"/>
</dbReference>
<dbReference type="PANTHER" id="PTHR39563">
    <property type="entry name" value="XANTHINE PHOSPHORIBOSYLTRANSFERASE"/>
    <property type="match status" value="1"/>
</dbReference>
<dbReference type="PANTHER" id="PTHR39563:SF1">
    <property type="entry name" value="XANTHINE-GUANINE PHOSPHORIBOSYLTRANSFERASE"/>
    <property type="match status" value="1"/>
</dbReference>
<dbReference type="Pfam" id="PF00156">
    <property type="entry name" value="Pribosyltran"/>
    <property type="match status" value="1"/>
</dbReference>
<dbReference type="SUPFAM" id="SSF53271">
    <property type="entry name" value="PRTase-like"/>
    <property type="match status" value="1"/>
</dbReference>
<dbReference type="PROSITE" id="PS00103">
    <property type="entry name" value="PUR_PYR_PR_TRANSFER"/>
    <property type="match status" value="1"/>
</dbReference>
<accession>Q138L1</accession>
<organism>
    <name type="scientific">Rhodopseudomonas palustris (strain BisB5)</name>
    <dbReference type="NCBI Taxonomy" id="316057"/>
    <lineage>
        <taxon>Bacteria</taxon>
        <taxon>Pseudomonadati</taxon>
        <taxon>Pseudomonadota</taxon>
        <taxon>Alphaproteobacteria</taxon>
        <taxon>Hyphomicrobiales</taxon>
        <taxon>Nitrobacteraceae</taxon>
        <taxon>Rhodopseudomonas</taxon>
    </lineage>
</organism>
<reference key="1">
    <citation type="submission" date="2006-03" db="EMBL/GenBank/DDBJ databases">
        <title>Complete sequence of Rhodopseudomonas palustris BisB5.</title>
        <authorList>
            <consortium name="US DOE Joint Genome Institute"/>
            <person name="Copeland A."/>
            <person name="Lucas S."/>
            <person name="Lapidus A."/>
            <person name="Barry K."/>
            <person name="Detter J.C."/>
            <person name="Glavina del Rio T."/>
            <person name="Hammon N."/>
            <person name="Israni S."/>
            <person name="Dalin E."/>
            <person name="Tice H."/>
            <person name="Pitluck S."/>
            <person name="Chain P."/>
            <person name="Malfatti S."/>
            <person name="Shin M."/>
            <person name="Vergez L."/>
            <person name="Schmutz J."/>
            <person name="Larimer F."/>
            <person name="Land M."/>
            <person name="Hauser L."/>
            <person name="Pelletier D.A."/>
            <person name="Kyrpides N."/>
            <person name="Lykidis A."/>
            <person name="Oda Y."/>
            <person name="Harwood C.S."/>
            <person name="Richardson P."/>
        </authorList>
    </citation>
    <scope>NUCLEOTIDE SEQUENCE [LARGE SCALE GENOMIC DNA]</scope>
    <source>
        <strain>BisB5</strain>
    </source>
</reference>
<protein>
    <recommendedName>
        <fullName evidence="1">Xanthine-guanine phosphoribosyltransferase</fullName>
        <shortName evidence="1">XGPRT</shortName>
        <ecNumber evidence="1">2.4.2.-</ecNumber>
        <ecNumber evidence="1">2.4.2.22</ecNumber>
    </recommendedName>
    <alternativeName>
        <fullName evidence="1">Xanthine phosphoribosyltransferase</fullName>
    </alternativeName>
</protein>